<protein>
    <recommendedName>
        <fullName>Delta-like protein 4</fullName>
    </recommendedName>
    <alternativeName>
        <fullName>Drosophila Delta homolog 4</fullName>
        <shortName>Delta4</shortName>
    </alternativeName>
</protein>
<organism>
    <name type="scientific">Homo sapiens</name>
    <name type="common">Human</name>
    <dbReference type="NCBI Taxonomy" id="9606"/>
    <lineage>
        <taxon>Eukaryota</taxon>
        <taxon>Metazoa</taxon>
        <taxon>Chordata</taxon>
        <taxon>Craniata</taxon>
        <taxon>Vertebrata</taxon>
        <taxon>Euteleostomi</taxon>
        <taxon>Mammalia</taxon>
        <taxon>Eutheria</taxon>
        <taxon>Euarchontoglires</taxon>
        <taxon>Primates</taxon>
        <taxon>Haplorrhini</taxon>
        <taxon>Catarrhini</taxon>
        <taxon>Hominidae</taxon>
        <taxon>Homo</taxon>
    </lineage>
</organism>
<keyword id="KW-0002">3D-structure</keyword>
<keyword id="KW-0037">Angiogenesis</keyword>
<keyword id="KW-1003">Cell membrane</keyword>
<keyword id="KW-0217">Developmental protein</keyword>
<keyword id="KW-0221">Differentiation</keyword>
<keyword id="KW-0903">Direct protein sequencing</keyword>
<keyword id="KW-0225">Disease variant</keyword>
<keyword id="KW-1015">Disulfide bond</keyword>
<keyword id="KW-0245">EGF-like domain</keyword>
<keyword id="KW-0325">Glycoprotein</keyword>
<keyword id="KW-0472">Membrane</keyword>
<keyword id="KW-0524">Neurogenesis</keyword>
<keyword id="KW-0914">Notch signaling pathway</keyword>
<keyword id="KW-1267">Proteomics identification</keyword>
<keyword id="KW-1185">Reference proteome</keyword>
<keyword id="KW-0677">Repeat</keyword>
<keyword id="KW-0716">Sensory transduction</keyword>
<keyword id="KW-0732">Signal</keyword>
<keyword id="KW-0812">Transmembrane</keyword>
<keyword id="KW-1133">Transmembrane helix</keyword>
<keyword id="KW-0844">Vision</keyword>
<gene>
    <name type="primary">DLL4</name>
    <name type="ORF">UNQ1895/PRO4341</name>
</gene>
<feature type="signal peptide" evidence="8">
    <location>
        <begin position="1"/>
        <end position="26"/>
    </location>
</feature>
<feature type="chain" id="PRO_0000007512" description="Delta-like protein 4">
    <location>
        <begin position="27"/>
        <end position="685"/>
    </location>
</feature>
<feature type="topological domain" description="Extracellular" evidence="4">
    <location>
        <begin position="27"/>
        <end position="529"/>
    </location>
</feature>
<feature type="transmembrane region" description="Helical" evidence="4">
    <location>
        <begin position="530"/>
        <end position="550"/>
    </location>
</feature>
<feature type="topological domain" description="Cytoplasmic" evidence="4">
    <location>
        <begin position="551"/>
        <end position="685"/>
    </location>
</feature>
<feature type="domain" description="DSL" evidence="6">
    <location>
        <begin position="173"/>
        <end position="217"/>
    </location>
</feature>
<feature type="domain" description="EGF-like 1" evidence="5">
    <location>
        <begin position="218"/>
        <end position="251"/>
    </location>
</feature>
<feature type="domain" description="EGF-like 2" evidence="5">
    <location>
        <begin position="252"/>
        <end position="282"/>
    </location>
</feature>
<feature type="domain" description="EGF-like 3" evidence="5">
    <location>
        <begin position="284"/>
        <end position="322"/>
    </location>
</feature>
<feature type="domain" description="EGF-like 4" evidence="5">
    <location>
        <begin position="324"/>
        <end position="360"/>
    </location>
</feature>
<feature type="domain" description="EGF-like 5" evidence="5">
    <location>
        <begin position="362"/>
        <end position="400"/>
    </location>
</feature>
<feature type="domain" description="EGF-like 6" evidence="5">
    <location>
        <begin position="402"/>
        <end position="438"/>
    </location>
</feature>
<feature type="domain" description="EGF-like 7" evidence="5">
    <location>
        <begin position="440"/>
        <end position="476"/>
    </location>
</feature>
<feature type="domain" description="EGF-like 8" evidence="5">
    <location>
        <begin position="480"/>
        <end position="518"/>
    </location>
</feature>
<feature type="region of interest" description="Interaction with Notch1" evidence="2">
    <location>
        <begin position="185"/>
        <end position="187"/>
    </location>
</feature>
<feature type="region of interest" description="Interaction with Notch1" evidence="2">
    <location>
        <begin position="191"/>
        <end position="195"/>
    </location>
</feature>
<feature type="site" description="Interaction with Notch1" evidence="2">
    <location>
        <position position="110"/>
    </location>
</feature>
<feature type="site" description="Interaction with Notch1" evidence="2">
    <location>
        <position position="216"/>
    </location>
</feature>
<feature type="glycosylation site" description="N-linked (GlcNAc...) asparagine" evidence="2">
    <location>
        <position position="108"/>
    </location>
</feature>
<feature type="glycosylation site" description="N-linked (GlcNAc...) asparagine" evidence="4">
    <location>
        <position position="183"/>
    </location>
</feature>
<feature type="glycosylation site" description="N-linked (GlcNAc...) asparagine" evidence="4">
    <location>
        <position position="205"/>
    </location>
</feature>
<feature type="glycosylation site" description="N-linked (GlcNAc...) asparagine" evidence="4">
    <location>
        <position position="393"/>
    </location>
</feature>
<feature type="disulfide bond" evidence="2">
    <location>
        <begin position="50"/>
        <end position="54"/>
    </location>
</feature>
<feature type="disulfide bond" evidence="2">
    <location>
        <begin position="61"/>
        <end position="74"/>
    </location>
</feature>
<feature type="disulfide bond" evidence="2 6">
    <location>
        <begin position="175"/>
        <end position="184"/>
    </location>
</feature>
<feature type="disulfide bond" evidence="2 6">
    <location>
        <begin position="188"/>
        <end position="200"/>
    </location>
</feature>
<feature type="disulfide bond" evidence="2 6">
    <location>
        <begin position="208"/>
        <end position="217"/>
    </location>
</feature>
<feature type="disulfide bond" evidence="2 5">
    <location>
        <begin position="222"/>
        <end position="233"/>
    </location>
</feature>
<feature type="disulfide bond" evidence="2 5">
    <location>
        <begin position="226"/>
        <end position="239"/>
    </location>
</feature>
<feature type="disulfide bond" evidence="2 5">
    <location>
        <begin position="241"/>
        <end position="250"/>
    </location>
</feature>
<feature type="disulfide bond" evidence="2">
    <location>
        <begin position="253"/>
        <end position="264"/>
    </location>
</feature>
<feature type="disulfide bond" evidence="2">
    <location>
        <begin position="259"/>
        <end position="270"/>
    </location>
</feature>
<feature type="disulfide bond" evidence="2 5">
    <location>
        <begin position="272"/>
        <end position="281"/>
    </location>
</feature>
<feature type="disulfide bond" evidence="1">
    <location>
        <begin position="288"/>
        <end position="300"/>
    </location>
</feature>
<feature type="disulfide bond" evidence="1">
    <location>
        <begin position="294"/>
        <end position="310"/>
    </location>
</feature>
<feature type="disulfide bond" evidence="1">
    <location>
        <begin position="312"/>
        <end position="321"/>
    </location>
</feature>
<feature type="disulfide bond" evidence="1">
    <location>
        <begin position="328"/>
        <end position="339"/>
    </location>
</feature>
<feature type="disulfide bond" evidence="1">
    <location>
        <begin position="333"/>
        <end position="348"/>
    </location>
</feature>
<feature type="disulfide bond" evidence="1">
    <location>
        <begin position="350"/>
        <end position="359"/>
    </location>
</feature>
<feature type="disulfide bond" evidence="1">
    <location>
        <begin position="366"/>
        <end position="377"/>
    </location>
</feature>
<feature type="disulfide bond" evidence="1">
    <location>
        <begin position="371"/>
        <end position="388"/>
    </location>
</feature>
<feature type="disulfide bond" evidence="1">
    <location>
        <begin position="390"/>
        <end position="399"/>
    </location>
</feature>
<feature type="disulfide bond" evidence="1">
    <location>
        <begin position="406"/>
        <end position="417"/>
    </location>
</feature>
<feature type="disulfide bond" evidence="1">
    <location>
        <begin position="411"/>
        <end position="426"/>
    </location>
</feature>
<feature type="disulfide bond" evidence="1">
    <location>
        <begin position="428"/>
        <end position="437"/>
    </location>
</feature>
<feature type="disulfide bond" evidence="1">
    <location>
        <begin position="444"/>
        <end position="455"/>
    </location>
</feature>
<feature type="disulfide bond" evidence="1">
    <location>
        <begin position="449"/>
        <end position="464"/>
    </location>
</feature>
<feature type="disulfide bond" evidence="1">
    <location>
        <begin position="466"/>
        <end position="475"/>
    </location>
</feature>
<feature type="disulfide bond" evidence="1">
    <location>
        <begin position="484"/>
        <end position="495"/>
    </location>
</feature>
<feature type="disulfide bond" evidence="1">
    <location>
        <begin position="489"/>
        <end position="506"/>
    </location>
</feature>
<feature type="disulfide bond" evidence="1">
    <location>
        <begin position="508"/>
        <end position="517"/>
    </location>
</feature>
<feature type="sequence variant" id="VAR_075858" description="In AOS6; dbSNP:rs796065350." evidence="11">
    <original>A</original>
    <variation>P</variation>
    <location>
        <position position="121"/>
    </location>
</feature>
<feature type="sequence variant" id="VAR_075859" description="In AOS6; dbSNP:rs796065348." evidence="11">
    <original>R</original>
    <variation>C</variation>
    <location>
        <position position="186"/>
    </location>
</feature>
<feature type="sequence variant" id="VAR_075860" description="In AOS6; dbSNP:rs796065351." evidence="11">
    <original>F</original>
    <variation>L</variation>
    <location>
        <position position="195"/>
    </location>
</feature>
<feature type="sequence variant" id="VAR_075861" description="In AOS6; dbSNP:rs796065349." evidence="11">
    <original>P</original>
    <variation>T</variation>
    <location>
        <position position="267"/>
    </location>
</feature>
<feature type="sequence variant" id="VAR_075862" description="In AOS6; dbSNP:rs796065347." evidence="11">
    <original>C</original>
    <variation>R</variation>
    <location>
        <position position="390"/>
    </location>
</feature>
<feature type="sequence variant" id="VAR_075863" description="In AOS6; dbSNP:rs796065346." evidence="11">
    <original>C</original>
    <variation>Y</variation>
    <location>
        <position position="390"/>
    </location>
</feature>
<feature type="sequence variant" id="VAR_075864" description="In AOS6; dbSNP:rs796065345." evidence="11">
    <original>C</original>
    <variation>W</variation>
    <location>
        <position position="455"/>
    </location>
</feature>
<feature type="strand" evidence="13">
    <location>
        <begin position="28"/>
        <end position="38"/>
    </location>
</feature>
<feature type="strand" evidence="13">
    <location>
        <begin position="51"/>
        <end position="53"/>
    </location>
</feature>
<feature type="strand" evidence="13">
    <location>
        <begin position="55"/>
        <end position="64"/>
    </location>
</feature>
<feature type="strand" evidence="13">
    <location>
        <begin position="77"/>
        <end position="80"/>
    </location>
</feature>
<feature type="strand" evidence="13">
    <location>
        <begin position="85"/>
        <end position="90"/>
    </location>
</feature>
<feature type="strand" evidence="13">
    <location>
        <begin position="103"/>
        <end position="109"/>
    </location>
</feature>
<feature type="strand" evidence="13">
    <location>
        <begin position="113"/>
        <end position="123"/>
    </location>
</feature>
<feature type="strand" evidence="13">
    <location>
        <begin position="125"/>
        <end position="127"/>
    </location>
</feature>
<feature type="turn" evidence="13">
    <location>
        <begin position="131"/>
        <end position="133"/>
    </location>
</feature>
<feature type="helix" evidence="13">
    <location>
        <begin position="136"/>
        <end position="138"/>
    </location>
</feature>
<feature type="strand" evidence="13">
    <location>
        <begin position="139"/>
        <end position="148"/>
    </location>
</feature>
<feature type="strand" evidence="13">
    <location>
        <begin position="151"/>
        <end position="153"/>
    </location>
</feature>
<feature type="strand" evidence="13">
    <location>
        <begin position="156"/>
        <end position="161"/>
    </location>
</feature>
<feature type="strand" evidence="13">
    <location>
        <begin position="166"/>
        <end position="174"/>
    </location>
</feature>
<feature type="strand" evidence="13">
    <location>
        <begin position="179"/>
        <end position="181"/>
    </location>
</feature>
<feature type="strand" evidence="13">
    <location>
        <begin position="191"/>
        <end position="193"/>
    </location>
</feature>
<feature type="strand" evidence="13">
    <location>
        <begin position="196"/>
        <end position="200"/>
    </location>
</feature>
<feature type="strand" evidence="13">
    <location>
        <begin position="206"/>
        <end position="208"/>
    </location>
</feature>
<feature type="strand" evidence="13">
    <location>
        <begin position="212"/>
        <end position="214"/>
    </location>
</feature>
<feature type="turn" evidence="13">
    <location>
        <begin position="228"/>
        <end position="230"/>
    </location>
</feature>
<feature type="strand" evidence="13">
    <location>
        <begin position="245"/>
        <end position="247"/>
    </location>
</feature>
<feature type="strand" evidence="13">
    <location>
        <begin position="260"/>
        <end position="263"/>
    </location>
</feature>
<feature type="turn" evidence="13">
    <location>
        <begin position="278"/>
        <end position="281"/>
    </location>
</feature>
<feature type="strand" evidence="13">
    <location>
        <begin position="283"/>
        <end position="285"/>
    </location>
</feature>
<feature type="helix" evidence="13">
    <location>
        <begin position="287"/>
        <end position="291"/>
    </location>
</feature>
<feature type="strand" evidence="13">
    <location>
        <begin position="299"/>
        <end position="303"/>
    </location>
</feature>
<feature type="turn" evidence="13">
    <location>
        <begin position="304"/>
        <end position="306"/>
    </location>
</feature>
<feature type="strand" evidence="13">
    <location>
        <begin position="307"/>
        <end position="311"/>
    </location>
</feature>
<feature type="strand" evidence="13">
    <location>
        <begin position="316"/>
        <end position="321"/>
    </location>
</feature>
<proteinExistence type="evidence at protein level"/>
<dbReference type="EMBL" id="AF253468">
    <property type="protein sequence ID" value="AAF76427.1"/>
    <property type="molecule type" value="mRNA"/>
</dbReference>
<dbReference type="EMBL" id="AB036931">
    <property type="protein sequence ID" value="BAB16085.1"/>
    <property type="molecule type" value="mRNA"/>
</dbReference>
<dbReference type="EMBL" id="AB043894">
    <property type="protein sequence ID" value="BAB18581.1"/>
    <property type="molecule type" value="mRNA"/>
</dbReference>
<dbReference type="EMBL" id="AY358894">
    <property type="protein sequence ID" value="AAQ89253.1"/>
    <property type="molecule type" value="mRNA"/>
</dbReference>
<dbReference type="EMBL" id="BC106950">
    <property type="protein sequence ID" value="AAI06951.1"/>
    <property type="molecule type" value="mRNA"/>
</dbReference>
<dbReference type="EMBL" id="AF279305">
    <property type="protein sequence ID" value="AAF81912.1"/>
    <property type="molecule type" value="mRNA"/>
</dbReference>
<dbReference type="CCDS" id="CCDS45232.1"/>
<dbReference type="PIR" id="JC7570">
    <property type="entry name" value="JC7570"/>
</dbReference>
<dbReference type="RefSeq" id="NP_061947.1">
    <property type="nucleotide sequence ID" value="NM_019074.4"/>
</dbReference>
<dbReference type="PDB" id="5MVX">
    <property type="method" value="X-ray"/>
    <property type="resolution" value="2.17 A"/>
    <property type="chains" value="A=27-325"/>
</dbReference>
<dbReference type="PDBsum" id="5MVX"/>
<dbReference type="SMR" id="Q9NR61"/>
<dbReference type="BioGRID" id="120045">
    <property type="interactions" value="1"/>
</dbReference>
<dbReference type="FunCoup" id="Q9NR61">
    <property type="interactions" value="762"/>
</dbReference>
<dbReference type="IntAct" id="Q9NR61">
    <property type="interactions" value="1"/>
</dbReference>
<dbReference type="STRING" id="9606.ENSP00000249749"/>
<dbReference type="ChEMBL" id="CHEMBL3712916"/>
<dbReference type="GlyCosmos" id="Q9NR61">
    <property type="glycosylation" value="4 sites, No reported glycans"/>
</dbReference>
<dbReference type="GlyGen" id="Q9NR61">
    <property type="glycosylation" value="4 sites, 1 N-linked glycan (1 site)"/>
</dbReference>
<dbReference type="iPTMnet" id="Q9NR61"/>
<dbReference type="PhosphoSitePlus" id="Q9NR61"/>
<dbReference type="BioMuta" id="DLL4"/>
<dbReference type="DMDM" id="13431490"/>
<dbReference type="jPOST" id="Q9NR61"/>
<dbReference type="MassIVE" id="Q9NR61"/>
<dbReference type="PaxDb" id="9606-ENSP00000249749"/>
<dbReference type="PeptideAtlas" id="Q9NR61"/>
<dbReference type="ProteomicsDB" id="82285"/>
<dbReference type="ABCD" id="Q9NR61">
    <property type="antibodies" value="67 sequenced antibodies"/>
</dbReference>
<dbReference type="Antibodypedia" id="5995">
    <property type="antibodies" value="961 antibodies from 46 providers"/>
</dbReference>
<dbReference type="DNASU" id="54567"/>
<dbReference type="Ensembl" id="ENST00000249749.7">
    <property type="protein sequence ID" value="ENSP00000249749.5"/>
    <property type="gene ID" value="ENSG00000128917.8"/>
</dbReference>
<dbReference type="GeneID" id="54567"/>
<dbReference type="KEGG" id="hsa:54567"/>
<dbReference type="MANE-Select" id="ENST00000249749.7">
    <property type="protein sequence ID" value="ENSP00000249749.5"/>
    <property type="RefSeq nucleotide sequence ID" value="NM_019074.4"/>
    <property type="RefSeq protein sequence ID" value="NP_061947.1"/>
</dbReference>
<dbReference type="UCSC" id="uc001zng.3">
    <property type="organism name" value="human"/>
</dbReference>
<dbReference type="AGR" id="HGNC:2910"/>
<dbReference type="CTD" id="54567"/>
<dbReference type="DisGeNET" id="54567"/>
<dbReference type="GeneCards" id="DLL4"/>
<dbReference type="HGNC" id="HGNC:2910">
    <property type="gene designation" value="DLL4"/>
</dbReference>
<dbReference type="HPA" id="ENSG00000128917">
    <property type="expression patterns" value="Low tissue specificity"/>
</dbReference>
<dbReference type="MalaCards" id="DLL4"/>
<dbReference type="MIM" id="605185">
    <property type="type" value="gene"/>
</dbReference>
<dbReference type="MIM" id="616589">
    <property type="type" value="phenotype"/>
</dbReference>
<dbReference type="neXtProt" id="NX_Q9NR61"/>
<dbReference type="OpenTargets" id="ENSG00000128917"/>
<dbReference type="Orphanet" id="974">
    <property type="disease" value="Adams-Oliver syndrome"/>
</dbReference>
<dbReference type="Orphanet" id="1114">
    <property type="disease" value="Aplasia cutis congenita"/>
</dbReference>
<dbReference type="PharmGKB" id="PA27366"/>
<dbReference type="VEuPathDB" id="HostDB:ENSG00000128917"/>
<dbReference type="eggNOG" id="KOG1217">
    <property type="taxonomic scope" value="Eukaryota"/>
</dbReference>
<dbReference type="GeneTree" id="ENSGT00940000157441"/>
<dbReference type="HOGENOM" id="CLU_012574_1_0_1"/>
<dbReference type="InParanoid" id="Q9NR61"/>
<dbReference type="OMA" id="ICLAGCT"/>
<dbReference type="OrthoDB" id="283575at2759"/>
<dbReference type="PAN-GO" id="Q9NR61">
    <property type="GO annotations" value="4 GO annotations based on evolutionary models"/>
</dbReference>
<dbReference type="PhylomeDB" id="Q9NR61"/>
<dbReference type="TreeFam" id="TF351835"/>
<dbReference type="PathwayCommons" id="Q9NR61"/>
<dbReference type="Reactome" id="R-HSA-2122948">
    <property type="pathway name" value="Activated NOTCH1 Transmits Signal to the Nucleus"/>
</dbReference>
<dbReference type="Reactome" id="R-HSA-2644606">
    <property type="pathway name" value="Constitutive Signaling by NOTCH1 PEST Domain Mutants"/>
</dbReference>
<dbReference type="Reactome" id="R-HSA-2660826">
    <property type="pathway name" value="Constitutive Signaling by NOTCH1 t(7;9)(NOTCH1:M1580_K2555) Translocation Mutant"/>
</dbReference>
<dbReference type="Reactome" id="R-HSA-2691232">
    <property type="pathway name" value="Constitutive Signaling by NOTCH1 HD Domain Mutants"/>
</dbReference>
<dbReference type="Reactome" id="R-HSA-2894862">
    <property type="pathway name" value="Constitutive Signaling by NOTCH1 HD+PEST Domain Mutants"/>
</dbReference>
<dbReference type="Reactome" id="R-HSA-2979096">
    <property type="pathway name" value="NOTCH2 Activation and Transmission of Signal to the Nucleus"/>
</dbReference>
<dbReference type="Reactome" id="R-HSA-9013507">
    <property type="pathway name" value="NOTCH3 Activation and Transmission of Signal to the Nucleus"/>
</dbReference>
<dbReference type="Reactome" id="R-HSA-9013700">
    <property type="pathway name" value="NOTCH4 Activation and Transmission of Signal to the Nucleus"/>
</dbReference>
<dbReference type="SignaLink" id="Q9NR61"/>
<dbReference type="SIGNOR" id="Q9NR61"/>
<dbReference type="BioGRID-ORCS" id="54567">
    <property type="hits" value="11 hits in 1147 CRISPR screens"/>
</dbReference>
<dbReference type="GeneWiki" id="DLL4"/>
<dbReference type="GenomeRNAi" id="54567"/>
<dbReference type="Pharos" id="Q9NR61">
    <property type="development level" value="Tbio"/>
</dbReference>
<dbReference type="PRO" id="PR:Q9NR61"/>
<dbReference type="Proteomes" id="UP000005640">
    <property type="component" value="Chromosome 15"/>
</dbReference>
<dbReference type="RNAct" id="Q9NR61">
    <property type="molecule type" value="protein"/>
</dbReference>
<dbReference type="Bgee" id="ENSG00000128917">
    <property type="expression patterns" value="Expressed in vena cava and 138 other cell types or tissues"/>
</dbReference>
<dbReference type="GO" id="GO:0005886">
    <property type="term" value="C:plasma membrane"/>
    <property type="evidence" value="ECO:0000318"/>
    <property type="project" value="GO_Central"/>
</dbReference>
<dbReference type="GO" id="GO:0005509">
    <property type="term" value="F:calcium ion binding"/>
    <property type="evidence" value="ECO:0007669"/>
    <property type="project" value="InterPro"/>
</dbReference>
<dbReference type="GO" id="GO:0005112">
    <property type="term" value="F:Notch binding"/>
    <property type="evidence" value="ECO:0000353"/>
    <property type="project" value="BHF-UCL"/>
</dbReference>
<dbReference type="GO" id="GO:0048018">
    <property type="term" value="F:receptor ligand activity"/>
    <property type="evidence" value="ECO:0000314"/>
    <property type="project" value="BHF-UCL"/>
</dbReference>
<dbReference type="GO" id="GO:0001525">
    <property type="term" value="P:angiogenesis"/>
    <property type="evidence" value="ECO:0000250"/>
    <property type="project" value="BHF-UCL"/>
</dbReference>
<dbReference type="GO" id="GO:0003180">
    <property type="term" value="P:aortic valve morphogenesis"/>
    <property type="evidence" value="ECO:0000314"/>
    <property type="project" value="BHF-UCL"/>
</dbReference>
<dbReference type="GO" id="GO:0072554">
    <property type="term" value="P:blood vessel lumenization"/>
    <property type="evidence" value="ECO:0007669"/>
    <property type="project" value="Ensembl"/>
</dbReference>
<dbReference type="GO" id="GO:0001974">
    <property type="term" value="P:blood vessel remodeling"/>
    <property type="evidence" value="ECO:0000250"/>
    <property type="project" value="BHF-UCL"/>
</dbReference>
<dbReference type="GO" id="GO:0001569">
    <property type="term" value="P:branching involved in blood vessel morphogenesis"/>
    <property type="evidence" value="ECO:0000250"/>
    <property type="project" value="BHF-UCL"/>
</dbReference>
<dbReference type="GO" id="GO:0003209">
    <property type="term" value="P:cardiac atrium morphogenesis"/>
    <property type="evidence" value="ECO:0000250"/>
    <property type="project" value="BHF-UCL"/>
</dbReference>
<dbReference type="GO" id="GO:0003208">
    <property type="term" value="P:cardiac ventricle morphogenesis"/>
    <property type="evidence" value="ECO:0000250"/>
    <property type="project" value="BHF-UCL"/>
</dbReference>
<dbReference type="GO" id="GO:0044344">
    <property type="term" value="P:cellular response to fibroblast growth factor stimulus"/>
    <property type="evidence" value="ECO:0000314"/>
    <property type="project" value="UniProtKB"/>
</dbReference>
<dbReference type="GO" id="GO:0035924">
    <property type="term" value="P:cellular response to vascular endothelial growth factor stimulus"/>
    <property type="evidence" value="ECO:0000315"/>
    <property type="project" value="UniProtKB"/>
</dbReference>
<dbReference type="GO" id="GO:0035912">
    <property type="term" value="P:dorsal aorta morphogenesis"/>
    <property type="evidence" value="ECO:0000250"/>
    <property type="project" value="BHF-UCL"/>
</dbReference>
<dbReference type="GO" id="GO:1903588">
    <property type="term" value="P:negative regulation of blood vessel endothelial cell proliferation involved in sprouting angiogenesis"/>
    <property type="evidence" value="ECO:0000314"/>
    <property type="project" value="UniProtKB"/>
</dbReference>
<dbReference type="GO" id="GO:0090051">
    <property type="term" value="P:negative regulation of cell migration involved in sprouting angiogenesis"/>
    <property type="evidence" value="ECO:0000314"/>
    <property type="project" value="UniProtKB"/>
</dbReference>
<dbReference type="GO" id="GO:0008285">
    <property type="term" value="P:negative regulation of cell population proliferation"/>
    <property type="evidence" value="ECO:0000315"/>
    <property type="project" value="UniProtKB"/>
</dbReference>
<dbReference type="GO" id="GO:0010596">
    <property type="term" value="P:negative regulation of endothelial cell migration"/>
    <property type="evidence" value="ECO:0000315"/>
    <property type="project" value="UniProtKB"/>
</dbReference>
<dbReference type="GO" id="GO:0010629">
    <property type="term" value="P:negative regulation of gene expression"/>
    <property type="evidence" value="ECO:0000314"/>
    <property type="project" value="UniProtKB"/>
</dbReference>
<dbReference type="GO" id="GO:0045746">
    <property type="term" value="P:negative regulation of Notch signaling pathway"/>
    <property type="evidence" value="ECO:0000250"/>
    <property type="project" value="UniProtKB"/>
</dbReference>
<dbReference type="GO" id="GO:0000122">
    <property type="term" value="P:negative regulation of transcription by RNA polymerase II"/>
    <property type="evidence" value="ECO:0000250"/>
    <property type="project" value="BHF-UCL"/>
</dbReference>
<dbReference type="GO" id="GO:0007219">
    <property type="term" value="P:Notch signaling pathway"/>
    <property type="evidence" value="ECO:0000314"/>
    <property type="project" value="BHF-UCL"/>
</dbReference>
<dbReference type="GO" id="GO:0003344">
    <property type="term" value="P:pericardium morphogenesis"/>
    <property type="evidence" value="ECO:0000250"/>
    <property type="project" value="BHF-UCL"/>
</dbReference>
<dbReference type="GO" id="GO:0010628">
    <property type="term" value="P:positive regulation of gene expression"/>
    <property type="evidence" value="ECO:0000314"/>
    <property type="project" value="UniProtKB"/>
</dbReference>
<dbReference type="GO" id="GO:2000179">
    <property type="term" value="P:positive regulation of neural precursor cell proliferation"/>
    <property type="evidence" value="ECO:0000250"/>
    <property type="project" value="UniProtKB"/>
</dbReference>
<dbReference type="GO" id="GO:0045747">
    <property type="term" value="P:positive regulation of Notch signaling pathway"/>
    <property type="evidence" value="ECO:0000250"/>
    <property type="project" value="UniProtKB"/>
</dbReference>
<dbReference type="GO" id="GO:0061074">
    <property type="term" value="P:regulation of neural retina development"/>
    <property type="evidence" value="ECO:0000250"/>
    <property type="project" value="UniProtKB"/>
</dbReference>
<dbReference type="GO" id="GO:0050767">
    <property type="term" value="P:regulation of neurogenesis"/>
    <property type="evidence" value="ECO:0007669"/>
    <property type="project" value="Ensembl"/>
</dbReference>
<dbReference type="GO" id="GO:0007165">
    <property type="term" value="P:signal transduction"/>
    <property type="evidence" value="ECO:0000304"/>
    <property type="project" value="ProtInc"/>
</dbReference>
<dbReference type="GO" id="GO:0030217">
    <property type="term" value="P:T cell differentiation"/>
    <property type="evidence" value="ECO:0000250"/>
    <property type="project" value="UniProtKB"/>
</dbReference>
<dbReference type="GO" id="GO:0060579">
    <property type="term" value="P:ventral spinal cord interneuron fate commitment"/>
    <property type="evidence" value="ECO:0000315"/>
    <property type="project" value="UniProtKB"/>
</dbReference>
<dbReference type="GO" id="GO:0003222">
    <property type="term" value="P:ventricular trabecula myocardium morphogenesis"/>
    <property type="evidence" value="ECO:0000250"/>
    <property type="project" value="BHF-UCL"/>
</dbReference>
<dbReference type="GO" id="GO:0007601">
    <property type="term" value="P:visual perception"/>
    <property type="evidence" value="ECO:0007669"/>
    <property type="project" value="UniProtKB-KW"/>
</dbReference>
<dbReference type="CDD" id="cd00054">
    <property type="entry name" value="EGF_CA"/>
    <property type="match status" value="5"/>
</dbReference>
<dbReference type="DisProt" id="DP01490"/>
<dbReference type="FunFam" id="2.10.25.10:FF:000018">
    <property type="entry name" value="Delta-like 1"/>
    <property type="match status" value="1"/>
</dbReference>
<dbReference type="FunFam" id="2.10.25.10:FF:000012">
    <property type="entry name" value="Delta-like protein"/>
    <property type="match status" value="4"/>
</dbReference>
<dbReference type="FunFam" id="2.10.25.10:FF:000064">
    <property type="entry name" value="Delta-like protein"/>
    <property type="match status" value="1"/>
</dbReference>
<dbReference type="FunFam" id="2.10.25.10:FF:000398">
    <property type="entry name" value="Delta-like protein"/>
    <property type="match status" value="1"/>
</dbReference>
<dbReference type="FunFam" id="2.10.25.140:FF:000001">
    <property type="entry name" value="Delta-like protein"/>
    <property type="match status" value="1"/>
</dbReference>
<dbReference type="FunFam" id="2.60.40.3510:FF:000003">
    <property type="entry name" value="Delta-like protein"/>
    <property type="match status" value="1"/>
</dbReference>
<dbReference type="Gene3D" id="2.10.25.140">
    <property type="match status" value="1"/>
</dbReference>
<dbReference type="Gene3D" id="2.60.40.3510">
    <property type="match status" value="1"/>
</dbReference>
<dbReference type="Gene3D" id="2.10.25.10">
    <property type="entry name" value="Laminin"/>
    <property type="match status" value="7"/>
</dbReference>
<dbReference type="InterPro" id="IPR001774">
    <property type="entry name" value="DSL"/>
</dbReference>
<dbReference type="InterPro" id="IPR001881">
    <property type="entry name" value="EGF-like_Ca-bd_dom"/>
</dbReference>
<dbReference type="InterPro" id="IPR000742">
    <property type="entry name" value="EGF-like_dom"/>
</dbReference>
<dbReference type="InterPro" id="IPR000152">
    <property type="entry name" value="EGF-type_Asp/Asn_hydroxyl_site"/>
</dbReference>
<dbReference type="InterPro" id="IPR009030">
    <property type="entry name" value="Growth_fac_rcpt_cys_sf"/>
</dbReference>
<dbReference type="InterPro" id="IPR051022">
    <property type="entry name" value="Notch_Cell-Fate_Det"/>
</dbReference>
<dbReference type="InterPro" id="IPR011651">
    <property type="entry name" value="Notch_ligand_N"/>
</dbReference>
<dbReference type="PANTHER" id="PTHR24049">
    <property type="entry name" value="CRUMBS FAMILY MEMBER"/>
    <property type="match status" value="1"/>
</dbReference>
<dbReference type="Pfam" id="PF01414">
    <property type="entry name" value="DSL"/>
    <property type="match status" value="1"/>
</dbReference>
<dbReference type="Pfam" id="PF00008">
    <property type="entry name" value="EGF"/>
    <property type="match status" value="5"/>
</dbReference>
<dbReference type="Pfam" id="PF21700">
    <property type="entry name" value="EGF_DL_JAG"/>
    <property type="match status" value="1"/>
</dbReference>
<dbReference type="Pfam" id="PF07657">
    <property type="entry name" value="MNNL"/>
    <property type="match status" value="1"/>
</dbReference>
<dbReference type="PRINTS" id="PR00010">
    <property type="entry name" value="EGFBLOOD"/>
</dbReference>
<dbReference type="SMART" id="SM00051">
    <property type="entry name" value="DSL"/>
    <property type="match status" value="1"/>
</dbReference>
<dbReference type="SMART" id="SM00181">
    <property type="entry name" value="EGF"/>
    <property type="match status" value="9"/>
</dbReference>
<dbReference type="SMART" id="SM00179">
    <property type="entry name" value="EGF_CA"/>
    <property type="match status" value="6"/>
</dbReference>
<dbReference type="SUPFAM" id="SSF57196">
    <property type="entry name" value="EGF/Laminin"/>
    <property type="match status" value="2"/>
</dbReference>
<dbReference type="SUPFAM" id="SSF57184">
    <property type="entry name" value="Growth factor receptor domain"/>
    <property type="match status" value="1"/>
</dbReference>
<dbReference type="PROSITE" id="PS00010">
    <property type="entry name" value="ASX_HYDROXYL"/>
    <property type="match status" value="1"/>
</dbReference>
<dbReference type="PROSITE" id="PS51051">
    <property type="entry name" value="DSL"/>
    <property type="match status" value="1"/>
</dbReference>
<dbReference type="PROSITE" id="PS00022">
    <property type="entry name" value="EGF_1"/>
    <property type="match status" value="8"/>
</dbReference>
<dbReference type="PROSITE" id="PS01186">
    <property type="entry name" value="EGF_2"/>
    <property type="match status" value="7"/>
</dbReference>
<dbReference type="PROSITE" id="PS50026">
    <property type="entry name" value="EGF_3"/>
    <property type="match status" value="8"/>
</dbReference>
<name>DLL4_HUMAN</name>
<accession>Q9NR61</accession>
<accession>Q3KP23</accession>
<accession>Q9NQT9</accession>
<sequence>MAAASRSASGWALLLLVALWQQRAAGSGVFQLQLQEFINERGVLASGRPCEPGCRTFFRVCLKHFQAVVSPGPCTFGTVSTPVLGTNSFAVRDDSSGGGRNPLQLPFNFTWPGTFSLIIEAWHAPGDDLRPEALPPDALISKIAIQGSLAVGQNWLLDEQTSTLTRLRYSYRVICSDNYYGDNCSRLCKKRNDHFGHYVCQPDGNLSCLPGWTGEYCQQPICLSGCHEQNGYCSKPAECLCRPGWQGRLCNECIPHNGCRHGTCSTPWQCTCDEGWGGLFCDQDLNYCTHHSPCKNGATCSNSGQRSYTCTCRPGYTGVDCELELSECDSNPCRNGGSCKDQEDGYHCLCPPGYYGLHCEHSTLSCADSPCFNGGSCRERNQGANYACECPPNFTGSNCEKKVDRCTSNPCANGGQCLNRGPSRMCRCRPGFTGTYCELHVSDCARNPCAHGGTCHDLENGLMCTCPAGFSGRRCEVRTSIDACASSPCFNRATCYTDLSTDTFVCNCPYGFVGSRCEFPVGLPPSFPWVAVSLGVGLAVLLVLLGMVAVAVRQLRLRRPDDGSREAMNNLSDFQKDNLIPAAQLKNTNQKKELEVDCGLDKSNCGKQQNHTLDYNLAPGPLGRGTMPGKFPHSDKSLGEKAPLRLHSEKPECRISAICSPRDSMYQSVCLISEERNECVIATEV</sequence>
<evidence type="ECO:0000250" key="1"/>
<evidence type="ECO:0000250" key="2">
    <source>
        <dbReference type="UniProtKB" id="D3ZHH1"/>
    </source>
</evidence>
<evidence type="ECO:0000250" key="3">
    <source>
        <dbReference type="UniProtKB" id="Q9JI71"/>
    </source>
</evidence>
<evidence type="ECO:0000255" key="4"/>
<evidence type="ECO:0000255" key="5">
    <source>
        <dbReference type="PROSITE-ProRule" id="PRU00076"/>
    </source>
</evidence>
<evidence type="ECO:0000255" key="6">
    <source>
        <dbReference type="PROSITE-ProRule" id="PRU00377"/>
    </source>
</evidence>
<evidence type="ECO:0000269" key="7">
    <source>
    </source>
</evidence>
<evidence type="ECO:0000269" key="8">
    <source>
    </source>
</evidence>
<evidence type="ECO:0000269" key="9">
    <source>
    </source>
</evidence>
<evidence type="ECO:0000269" key="10">
    <source>
    </source>
</evidence>
<evidence type="ECO:0000269" key="11">
    <source>
    </source>
</evidence>
<evidence type="ECO:0000305" key="12"/>
<evidence type="ECO:0007829" key="13">
    <source>
        <dbReference type="PDB" id="5MVX"/>
    </source>
</evidence>
<comment type="function">
    <text evidence="3 7 9 10">Involved in the Notch signaling pathway as Notch ligand (PubMed:11134954). Activates NOTCH1 and NOTCH4. Involved in angiogenesis; negatively regulates endothelial cell proliferation and migration and angiogenic sprouting (PubMed:20616313). Essential for retinal progenitor proliferation. Required for suppressing rod fates in late retinal progenitors as well as for proper generation of other retinal cell types (By similarity). During spinal cord neurogenesis, inhibits V2a interneuron fate (PubMed:17728344).</text>
</comment>
<comment type="subunit">
    <text evidence="2">Interacts with NOTCH4. Interacts (via N-terminal DSL and MNNL domains) with NOTCH1 (via EGF-like domains).</text>
</comment>
<comment type="interaction">
    <interactant intactId="EBI-11700027">
        <id>Q9NR61</id>
    </interactant>
    <interactant intactId="EBI-1049004">
        <id>P57105</id>
        <label>SYNJ2BP</label>
    </interactant>
    <organismsDiffer>false</organismsDiffer>
    <experiments>3</experiments>
</comment>
<comment type="subcellular location">
    <subcellularLocation>
        <location evidence="12">Cell membrane</location>
        <topology evidence="12">Single-pass type I membrane protein</topology>
    </subcellularLocation>
</comment>
<comment type="tissue specificity">
    <text>Expressed in vascular endothelium.</text>
</comment>
<comment type="domain">
    <text>The Delta-Serrate-Lag2 (DSL) domain is required for binding to the Notch receptor.</text>
</comment>
<comment type="disease" evidence="11">
    <disease id="DI-04559">
        <name>Adams-Oliver syndrome 6</name>
        <acronym>AOS6</acronym>
        <description>A form of Adams-Oliver syndrome, a disorder characterized by the congenital absence of skin (aplasia cutis congenita) in combination with transverse limb defects. Aplasia cutis congenita can be located anywhere on the body, but in the vast majority of the cases, it is present on the posterior parietal region where it is often associated with an underlying defect of the parietal bones. Limb abnormalities are typically limb truncation defects affecting the distal phalanges or entire digits (true ectrodactyly). Only rarely, metatarsals/metacarpals or more proximal limb structures are also affected. Apart from transverse limb defects, syndactyly, most commonly of second and third toes, can also be observed. The clinical features are highly variable and can also include cardiovascular malformations, brain abnormalities and vascular defects such as cutis marmorata and dilated scalp veins.</description>
        <dbReference type="MIM" id="616589"/>
    </disease>
    <text>The disease is caused by variants affecting the gene represented in this entry.</text>
</comment>
<reference key="1">
    <citation type="journal article" date="2000" name="Genes Dev.">
        <title>Dll4, a novel Notch ligand expressed in arterial endothelium.</title>
        <authorList>
            <person name="Shutter J.R."/>
            <person name="Scully S."/>
            <person name="Fan W."/>
            <person name="Richards W.G."/>
            <person name="Kitajewski J."/>
            <person name="Deblandre G.A."/>
            <person name="Kintner C.R."/>
            <person name="Stark K.L."/>
        </authorList>
    </citation>
    <scope>NUCLEOTIDE SEQUENCE [MRNA]</scope>
    <source>
        <tissue>Brain</tissue>
    </source>
</reference>
<reference key="2">
    <citation type="submission" date="2000-01" db="EMBL/GenBank/DDBJ databases">
        <title>Human Delta-2, Notch ligand gene.</title>
        <authorList>
            <person name="Sakano S."/>
        </authorList>
    </citation>
    <scope>NUCLEOTIDE SEQUENCE [MRNA]</scope>
</reference>
<reference key="3">
    <citation type="journal article" date="2001" name="J. Biochem.">
        <title>Molecular cloning of Delta-4, a new mouse and human Notch ligand.</title>
        <authorList>
            <person name="Yoneya T."/>
            <person name="Tahara T."/>
            <person name="Nagao K."/>
            <person name="Yamada Y."/>
            <person name="Yamamoto T."/>
            <person name="Miyatani S."/>
            <person name="Nishikawa M."/>
        </authorList>
    </citation>
    <scope>NUCLEOTIDE SEQUENCE [MRNA]</scope>
    <scope>FUNCTION</scope>
</reference>
<reference key="4">
    <citation type="journal article" date="2003" name="Genome Res.">
        <title>The secreted protein discovery initiative (SPDI), a large-scale effort to identify novel human secreted and transmembrane proteins: a bioinformatics assessment.</title>
        <authorList>
            <person name="Clark H.F."/>
            <person name="Gurney A.L."/>
            <person name="Abaya E."/>
            <person name="Baker K."/>
            <person name="Baldwin D.T."/>
            <person name="Brush J."/>
            <person name="Chen J."/>
            <person name="Chow B."/>
            <person name="Chui C."/>
            <person name="Crowley C."/>
            <person name="Currell B."/>
            <person name="Deuel B."/>
            <person name="Dowd P."/>
            <person name="Eaton D."/>
            <person name="Foster J.S."/>
            <person name="Grimaldi C."/>
            <person name="Gu Q."/>
            <person name="Hass P.E."/>
            <person name="Heldens S."/>
            <person name="Huang A."/>
            <person name="Kim H.S."/>
            <person name="Klimowski L."/>
            <person name="Jin Y."/>
            <person name="Johnson S."/>
            <person name="Lee J."/>
            <person name="Lewis L."/>
            <person name="Liao D."/>
            <person name="Mark M.R."/>
            <person name="Robbie E."/>
            <person name="Sanchez C."/>
            <person name="Schoenfeld J."/>
            <person name="Seshagiri S."/>
            <person name="Simmons L."/>
            <person name="Singh J."/>
            <person name="Smith V."/>
            <person name="Stinson J."/>
            <person name="Vagts A."/>
            <person name="Vandlen R.L."/>
            <person name="Watanabe C."/>
            <person name="Wieand D."/>
            <person name="Woods K."/>
            <person name="Xie M.-H."/>
            <person name="Yansura D.G."/>
            <person name="Yi S."/>
            <person name="Yu G."/>
            <person name="Yuan J."/>
            <person name="Zhang M."/>
            <person name="Zhang Z."/>
            <person name="Goddard A.D."/>
            <person name="Wood W.I."/>
            <person name="Godowski P.J."/>
            <person name="Gray A.M."/>
        </authorList>
    </citation>
    <scope>NUCLEOTIDE SEQUENCE [LARGE SCALE MRNA]</scope>
</reference>
<reference key="5">
    <citation type="journal article" date="2004" name="Genome Res.">
        <title>The status, quality, and expansion of the NIH full-length cDNA project: the Mammalian Gene Collection (MGC).</title>
        <authorList>
            <consortium name="The MGC Project Team"/>
        </authorList>
    </citation>
    <scope>NUCLEOTIDE SEQUENCE [LARGE SCALE MRNA]</scope>
</reference>
<reference key="6">
    <citation type="journal article" date="2004" name="Protein Sci.">
        <title>Signal peptide prediction based on analysis of experimentally verified cleavage sites.</title>
        <authorList>
            <person name="Zhang Z."/>
            <person name="Henzel W.J."/>
        </authorList>
    </citation>
    <scope>PROTEIN SEQUENCE OF 27-41</scope>
</reference>
<reference key="7">
    <citation type="submission" date="2000-06" db="EMBL/GenBank/DDBJ databases">
        <title>A novel Delta gene expressed in embryonic and tumour vasculature.</title>
        <authorList>
            <person name="Mailhos C."/>
            <person name="Modlich U."/>
            <person name="Lewis J."/>
            <person name="Harris A."/>
            <person name="Bicknell R."/>
            <person name="Ish-Horowicz D."/>
        </authorList>
    </citation>
    <scope>NUCLEOTIDE SEQUENCE [MRNA] OF 33-685</scope>
    <source>
        <tissue>Placenta</tissue>
    </source>
</reference>
<reference key="8">
    <citation type="journal article" date="2007" name="Development">
        <title>A regulatory network involving Foxn4, Mash1 and delta-like 4/Notch1 generates V2a and V2b spinal interneurons from a common progenitor pool.</title>
        <authorList>
            <person name="Del Barrio M.G."/>
            <person name="Taveira-Marques R."/>
            <person name="Muroyama Y."/>
            <person name="Yuk D.I."/>
            <person name="Li S."/>
            <person name="Wines-Samuelson M."/>
            <person name="Shen J."/>
            <person name="Smith H.K."/>
            <person name="Xiang M."/>
            <person name="Rowitch D."/>
            <person name="Richardson W.D."/>
        </authorList>
    </citation>
    <scope>FUNCTION IN NEUROGENESIS</scope>
</reference>
<reference key="9">
    <citation type="journal article" date="2010" name="Circ. Res.">
        <title>Integrin cytoplasmic domain-associated protein-1 attenuates sprouting angiogenesis.</title>
        <authorList>
            <person name="Brutsch R."/>
            <person name="Liebler S.S."/>
            <person name="Wustehube J."/>
            <person name="Bartol A."/>
            <person name="Herberich S.E."/>
            <person name="Adam M.G."/>
            <person name="Telzerow A."/>
            <person name="Augustin H.G."/>
            <person name="Fischer A."/>
        </authorList>
    </citation>
    <scope>FUNCTION IN ANGIOGENESIS</scope>
</reference>
<reference key="10">
    <citation type="journal article" date="2015" name="Am. J. Hum. Genet.">
        <title>Heterozygous loss-of-function mutations in DLL4 cause Adams-Oliver syndrome.</title>
        <authorList>
            <person name="Meester J.A."/>
            <person name="Southgate L."/>
            <person name="Stittrich A.B."/>
            <person name="Venselaar H."/>
            <person name="Beekmans S.J."/>
            <person name="den Hollander N."/>
            <person name="Bijlsma E.K."/>
            <person name="Helderman-van den Enden A."/>
            <person name="Verheij J.B."/>
            <person name="Glusman G."/>
            <person name="Roach J.C."/>
            <person name="Lehman A."/>
            <person name="Patel M.S."/>
            <person name="de Vries B.B."/>
            <person name="Ruivenkamp C."/>
            <person name="Itin P."/>
            <person name="Prescott K."/>
            <person name="Clarke S."/>
            <person name="Trembath R."/>
            <person name="Zenker M."/>
            <person name="Sukalo M."/>
            <person name="Van Laer L."/>
            <person name="Loeys B."/>
            <person name="Wuyts W."/>
        </authorList>
    </citation>
    <scope>INVOLVEMENT IN AOS6</scope>
    <scope>VARIANTS AOS6 PRO-121; CYS-186; LEU-195; THR-267; ARG-390; TYR-390 AND TRP-455</scope>
</reference>